<name>SECM_ECO7I</name>
<reference key="1">
    <citation type="journal article" date="2009" name="PLoS Genet.">
        <title>Organised genome dynamics in the Escherichia coli species results in highly diverse adaptive paths.</title>
        <authorList>
            <person name="Touchon M."/>
            <person name="Hoede C."/>
            <person name="Tenaillon O."/>
            <person name="Barbe V."/>
            <person name="Baeriswyl S."/>
            <person name="Bidet P."/>
            <person name="Bingen E."/>
            <person name="Bonacorsi S."/>
            <person name="Bouchier C."/>
            <person name="Bouvet O."/>
            <person name="Calteau A."/>
            <person name="Chiapello H."/>
            <person name="Clermont O."/>
            <person name="Cruveiller S."/>
            <person name="Danchin A."/>
            <person name="Diard M."/>
            <person name="Dossat C."/>
            <person name="Karoui M.E."/>
            <person name="Frapy E."/>
            <person name="Garry L."/>
            <person name="Ghigo J.M."/>
            <person name="Gilles A.M."/>
            <person name="Johnson J."/>
            <person name="Le Bouguenec C."/>
            <person name="Lescat M."/>
            <person name="Mangenot S."/>
            <person name="Martinez-Jehanne V."/>
            <person name="Matic I."/>
            <person name="Nassif X."/>
            <person name="Oztas S."/>
            <person name="Petit M.A."/>
            <person name="Pichon C."/>
            <person name="Rouy Z."/>
            <person name="Ruf C.S."/>
            <person name="Schneider D."/>
            <person name="Tourret J."/>
            <person name="Vacherie B."/>
            <person name="Vallenet D."/>
            <person name="Medigue C."/>
            <person name="Rocha E.P.C."/>
            <person name="Denamur E."/>
        </authorList>
    </citation>
    <scope>NUCLEOTIDE SEQUENCE [LARGE SCALE GENOMIC DNA]</scope>
    <source>
        <strain>IAI39 / ExPEC</strain>
    </source>
</reference>
<proteinExistence type="inferred from homology"/>
<protein>
    <recommendedName>
        <fullName evidence="1">Secretion monitor</fullName>
    </recommendedName>
</protein>
<dbReference type="EMBL" id="CU928164">
    <property type="protein sequence ID" value="CAR16241.1"/>
    <property type="molecule type" value="Genomic_DNA"/>
</dbReference>
<dbReference type="RefSeq" id="WP_000014316.1">
    <property type="nucleotide sequence ID" value="NC_011750.1"/>
</dbReference>
<dbReference type="RefSeq" id="YP_002406149.1">
    <property type="nucleotide sequence ID" value="NC_011750.1"/>
</dbReference>
<dbReference type="SMR" id="B7NHK3"/>
<dbReference type="STRING" id="585057.ECIAI39_0100"/>
<dbReference type="KEGG" id="ect:ECIAI39_0100"/>
<dbReference type="PATRIC" id="fig|585057.6.peg.109"/>
<dbReference type="HOGENOM" id="CLU_108853_0_0_6"/>
<dbReference type="Proteomes" id="UP000000749">
    <property type="component" value="Chromosome"/>
</dbReference>
<dbReference type="GO" id="GO:0005829">
    <property type="term" value="C:cytosol"/>
    <property type="evidence" value="ECO:0007669"/>
    <property type="project" value="UniProtKB-SubCell"/>
</dbReference>
<dbReference type="GO" id="GO:0042597">
    <property type="term" value="C:periplasmic space"/>
    <property type="evidence" value="ECO:0007669"/>
    <property type="project" value="UniProtKB-SubCell"/>
</dbReference>
<dbReference type="GO" id="GO:0045182">
    <property type="term" value="F:translation regulator activity"/>
    <property type="evidence" value="ECO:0007669"/>
    <property type="project" value="InterPro"/>
</dbReference>
<dbReference type="HAMAP" id="MF_01332">
    <property type="entry name" value="SecM"/>
    <property type="match status" value="1"/>
</dbReference>
<dbReference type="InterPro" id="IPR009502">
    <property type="entry name" value="SecM"/>
</dbReference>
<dbReference type="NCBIfam" id="NF002799">
    <property type="entry name" value="PRK02943.1-1"/>
    <property type="match status" value="1"/>
</dbReference>
<dbReference type="Pfam" id="PF06558">
    <property type="entry name" value="SecM"/>
    <property type="match status" value="1"/>
</dbReference>
<dbReference type="PIRSF" id="PIRSF004572">
    <property type="entry name" value="SecM"/>
    <property type="match status" value="1"/>
</dbReference>
<sequence>MSGILTRWRQFGKRYFWPHLLLGMVAASLGLPALSNAAEPNAPAKATTRNHEPSAKVNFGQLALLEANTRRPNSNYSVDYWHQHAIRTVIRHLSFAMAPQTLPVAEESLPLQAQHLALLDTLSALLTQEGTPSEKGYHIDYAHFTPQAKFSTPVWISQAQGIRAGPQRLS</sequence>
<accession>B7NHK3</accession>
<gene>
    <name evidence="1" type="primary">secM</name>
    <name type="ordered locus">ECIAI39_0100</name>
</gene>
<feature type="signal peptide" evidence="1">
    <location>
        <begin position="1"/>
        <end position="37"/>
    </location>
</feature>
<feature type="chain" id="PRO_1000142335" description="Secretion monitor">
    <location>
        <begin position="38"/>
        <end position="170"/>
    </location>
</feature>
<organism>
    <name type="scientific">Escherichia coli O7:K1 (strain IAI39 / ExPEC)</name>
    <dbReference type="NCBI Taxonomy" id="585057"/>
    <lineage>
        <taxon>Bacteria</taxon>
        <taxon>Pseudomonadati</taxon>
        <taxon>Pseudomonadota</taxon>
        <taxon>Gammaproteobacteria</taxon>
        <taxon>Enterobacterales</taxon>
        <taxon>Enterobacteriaceae</taxon>
        <taxon>Escherichia</taxon>
    </lineage>
</organism>
<keyword id="KW-0963">Cytoplasm</keyword>
<keyword id="KW-0574">Periplasm</keyword>
<keyword id="KW-0732">Signal</keyword>
<comment type="function">
    <text evidence="1">Regulates secA expression by translational coupling of the secM secA operon. Translational pausing at a specific Pro residue 5 residues before the end of the protein may allow disruption of a mRNA repressor helix that normally suppresses secA translation initiation.</text>
</comment>
<comment type="subcellular location">
    <subcellularLocation>
        <location evidence="1">Cytoplasm</location>
        <location evidence="1">Cytosol</location>
    </subcellularLocation>
    <subcellularLocation>
        <location evidence="1">Periplasm</location>
    </subcellularLocation>
    <text evidence="1">The active form is cytosolic, while the periplasmic form is rapidly degraded, mainly by the tail-specific protease.</text>
</comment>
<comment type="similarity">
    <text evidence="1">Belongs to the SecM family.</text>
</comment>
<evidence type="ECO:0000255" key="1">
    <source>
        <dbReference type="HAMAP-Rule" id="MF_01332"/>
    </source>
</evidence>